<protein>
    <recommendedName>
        <fullName evidence="1">Small ribosomal subunit protein uS13</fullName>
    </recommendedName>
    <alternativeName>
        <fullName evidence="3">30S ribosomal protein S13</fullName>
    </alternativeName>
</protein>
<dbReference type="EMBL" id="AL445066">
    <property type="protein sequence ID" value="CAC12162.1"/>
    <property type="molecule type" value="Genomic_DNA"/>
</dbReference>
<dbReference type="RefSeq" id="WP_010901444.1">
    <property type="nucleotide sequence ID" value="NC_002578.1"/>
</dbReference>
<dbReference type="SMR" id="Q9HJD6"/>
<dbReference type="FunCoup" id="Q9HJD6">
    <property type="interactions" value="190"/>
</dbReference>
<dbReference type="STRING" id="273075.gene:9572254"/>
<dbReference type="PaxDb" id="273075-Ta1033"/>
<dbReference type="EnsemblBacteria" id="CAC12162">
    <property type="protein sequence ID" value="CAC12162"/>
    <property type="gene ID" value="CAC12162"/>
</dbReference>
<dbReference type="KEGG" id="tac:Ta1033"/>
<dbReference type="eggNOG" id="arCOG01722">
    <property type="taxonomic scope" value="Archaea"/>
</dbReference>
<dbReference type="HOGENOM" id="CLU_103849_0_0_2"/>
<dbReference type="InParanoid" id="Q9HJD6"/>
<dbReference type="OrthoDB" id="372127at2157"/>
<dbReference type="Proteomes" id="UP000001024">
    <property type="component" value="Chromosome"/>
</dbReference>
<dbReference type="GO" id="GO:0005829">
    <property type="term" value="C:cytosol"/>
    <property type="evidence" value="ECO:0007669"/>
    <property type="project" value="TreeGrafter"/>
</dbReference>
<dbReference type="GO" id="GO:0015935">
    <property type="term" value="C:small ribosomal subunit"/>
    <property type="evidence" value="ECO:0007669"/>
    <property type="project" value="TreeGrafter"/>
</dbReference>
<dbReference type="GO" id="GO:0019843">
    <property type="term" value="F:rRNA binding"/>
    <property type="evidence" value="ECO:0007669"/>
    <property type="project" value="UniProtKB-UniRule"/>
</dbReference>
<dbReference type="GO" id="GO:0003735">
    <property type="term" value="F:structural constituent of ribosome"/>
    <property type="evidence" value="ECO:0007669"/>
    <property type="project" value="InterPro"/>
</dbReference>
<dbReference type="GO" id="GO:0006412">
    <property type="term" value="P:translation"/>
    <property type="evidence" value="ECO:0007669"/>
    <property type="project" value="UniProtKB-UniRule"/>
</dbReference>
<dbReference type="Gene3D" id="1.10.8.50">
    <property type="match status" value="1"/>
</dbReference>
<dbReference type="Gene3D" id="4.10.910.10">
    <property type="entry name" value="30s ribosomal protein s13, domain 2"/>
    <property type="match status" value="1"/>
</dbReference>
<dbReference type="HAMAP" id="MF_01315">
    <property type="entry name" value="Ribosomal_uS13"/>
    <property type="match status" value="1"/>
</dbReference>
<dbReference type="InterPro" id="IPR027437">
    <property type="entry name" value="Rbsml_uS13_C"/>
</dbReference>
<dbReference type="InterPro" id="IPR001892">
    <property type="entry name" value="Ribosomal_uS13"/>
</dbReference>
<dbReference type="InterPro" id="IPR010979">
    <property type="entry name" value="Ribosomal_uS13-like_H2TH"/>
</dbReference>
<dbReference type="InterPro" id="IPR019977">
    <property type="entry name" value="Ribosomal_uS13_archaeal"/>
</dbReference>
<dbReference type="InterPro" id="IPR018269">
    <property type="entry name" value="Ribosomal_uS13_CS"/>
</dbReference>
<dbReference type="NCBIfam" id="NF003140">
    <property type="entry name" value="PRK04053.1"/>
    <property type="match status" value="1"/>
</dbReference>
<dbReference type="NCBIfam" id="TIGR03629">
    <property type="entry name" value="uS13_arch"/>
    <property type="match status" value="1"/>
</dbReference>
<dbReference type="PANTHER" id="PTHR10871">
    <property type="entry name" value="30S RIBOSOMAL PROTEIN S13/40S RIBOSOMAL PROTEIN S18"/>
    <property type="match status" value="1"/>
</dbReference>
<dbReference type="PANTHER" id="PTHR10871:SF3">
    <property type="entry name" value="SMALL RIBOSOMAL SUBUNIT PROTEIN US13"/>
    <property type="match status" value="1"/>
</dbReference>
<dbReference type="Pfam" id="PF00416">
    <property type="entry name" value="Ribosomal_S13"/>
    <property type="match status" value="1"/>
</dbReference>
<dbReference type="PIRSF" id="PIRSF002134">
    <property type="entry name" value="Ribosomal_S13"/>
    <property type="match status" value="1"/>
</dbReference>
<dbReference type="SUPFAM" id="SSF46946">
    <property type="entry name" value="S13-like H2TH domain"/>
    <property type="match status" value="1"/>
</dbReference>
<dbReference type="PROSITE" id="PS00646">
    <property type="entry name" value="RIBOSOMAL_S13_1"/>
    <property type="match status" value="1"/>
</dbReference>
<dbReference type="PROSITE" id="PS50159">
    <property type="entry name" value="RIBOSOMAL_S13_2"/>
    <property type="match status" value="1"/>
</dbReference>
<feature type="chain" id="PRO_0000132193" description="Small ribosomal subunit protein uS13">
    <location>
        <begin position="1"/>
        <end position="171"/>
    </location>
</feature>
<feature type="region of interest" description="Disordered" evidence="2">
    <location>
        <begin position="1"/>
        <end position="24"/>
    </location>
</feature>
<feature type="region of interest" description="Disordered" evidence="2">
    <location>
        <begin position="144"/>
        <end position="164"/>
    </location>
</feature>
<feature type="compositionally biased region" description="Polar residues" evidence="2">
    <location>
        <begin position="1"/>
        <end position="11"/>
    </location>
</feature>
<feature type="compositionally biased region" description="Basic residues" evidence="2">
    <location>
        <begin position="144"/>
        <end position="158"/>
    </location>
</feature>
<reference key="1">
    <citation type="journal article" date="2000" name="Nature">
        <title>The genome sequence of the thermoacidophilic scavenger Thermoplasma acidophilum.</title>
        <authorList>
            <person name="Ruepp A."/>
            <person name="Graml W."/>
            <person name="Santos-Martinez M.-L."/>
            <person name="Koretke K.K."/>
            <person name="Volker C."/>
            <person name="Mewes H.-W."/>
            <person name="Frishman D."/>
            <person name="Stocker S."/>
            <person name="Lupas A.N."/>
            <person name="Baumeister W."/>
        </authorList>
    </citation>
    <scope>NUCLEOTIDE SEQUENCE [LARGE SCALE GENOMIC DNA]</scope>
    <source>
        <strain>ATCC 25905 / DSM 1728 / JCM 9062 / NBRC 15155 / AMRC-C165</strain>
    </source>
</reference>
<gene>
    <name evidence="1" type="primary">rps13</name>
    <name type="ordered locus">Ta1033</name>
</gene>
<keyword id="KW-1185">Reference proteome</keyword>
<keyword id="KW-0687">Ribonucleoprotein</keyword>
<keyword id="KW-0689">Ribosomal protein</keyword>
<keyword id="KW-0694">RNA-binding</keyword>
<keyword id="KW-0699">rRNA-binding</keyword>
<evidence type="ECO:0000255" key="1">
    <source>
        <dbReference type="HAMAP-Rule" id="MF_01315"/>
    </source>
</evidence>
<evidence type="ECO:0000256" key="2">
    <source>
        <dbReference type="SAM" id="MobiDB-lite"/>
    </source>
</evidence>
<evidence type="ECO:0000305" key="3"/>
<comment type="function">
    <text evidence="1">Located at the top of the head of the 30S subunit, it contacts several helices of the 16S rRNA. In the 70S ribosome it contacts the 23S rRNA (bridge B1a) and protein L5 of the 50S subunit (bridge B1b), connecting the 2 subunits; these bridges are implicated in subunit movement.</text>
</comment>
<comment type="subunit">
    <text evidence="1">Part of the 30S ribosomal subunit. Forms a loose heterodimer with protein S19. Forms two bridges to the 50S subunit in the 70S ribosome.</text>
</comment>
<comment type="similarity">
    <text evidence="1">Belongs to the universal ribosomal protein uS13 family.</text>
</comment>
<sequence length="171" mass="19644">MAKGSANNVKVNQDAGKSQPEKKENKDFQYIVRIANKDLNGERLLPLALSDLKGIGERLGYVIAERLDLPIDKKIGELKEEQLEKLREYVEAKEYDLPEWLLNHRREPVTGKNLNLVSTDLEIQVQEDINLMKKIRSYKGIRHEKGKKVRGQRTRSNGRKGLSIGVVRKKE</sequence>
<name>RS13_THEAC</name>
<proteinExistence type="inferred from homology"/>
<organism>
    <name type="scientific">Thermoplasma acidophilum (strain ATCC 25905 / DSM 1728 / JCM 9062 / NBRC 15155 / AMRC-C165)</name>
    <dbReference type="NCBI Taxonomy" id="273075"/>
    <lineage>
        <taxon>Archaea</taxon>
        <taxon>Methanobacteriati</taxon>
        <taxon>Thermoplasmatota</taxon>
        <taxon>Thermoplasmata</taxon>
        <taxon>Thermoplasmatales</taxon>
        <taxon>Thermoplasmataceae</taxon>
        <taxon>Thermoplasma</taxon>
    </lineage>
</organism>
<accession>Q9HJD6</accession>